<feature type="chain" id="PRO_0000060986" description="Cytochrome b">
    <location>
        <begin position="1"/>
        <end position="379"/>
    </location>
</feature>
<feature type="transmembrane region" description="Helical" evidence="2">
    <location>
        <begin position="33"/>
        <end position="53"/>
    </location>
</feature>
<feature type="transmembrane region" description="Helical" evidence="2">
    <location>
        <begin position="77"/>
        <end position="98"/>
    </location>
</feature>
<feature type="transmembrane region" description="Helical" evidence="2">
    <location>
        <begin position="113"/>
        <end position="133"/>
    </location>
</feature>
<feature type="transmembrane region" description="Helical" evidence="2">
    <location>
        <begin position="178"/>
        <end position="198"/>
    </location>
</feature>
<feature type="transmembrane region" description="Helical" evidence="2">
    <location>
        <begin position="226"/>
        <end position="246"/>
    </location>
</feature>
<feature type="transmembrane region" description="Helical" evidence="2">
    <location>
        <begin position="288"/>
        <end position="308"/>
    </location>
</feature>
<feature type="transmembrane region" description="Helical" evidence="2">
    <location>
        <begin position="320"/>
        <end position="340"/>
    </location>
</feature>
<feature type="transmembrane region" description="Helical" evidence="2">
    <location>
        <begin position="347"/>
        <end position="367"/>
    </location>
</feature>
<feature type="binding site" description="axial binding residue" evidence="2">
    <location>
        <position position="83"/>
    </location>
    <ligand>
        <name>heme b</name>
        <dbReference type="ChEBI" id="CHEBI:60344"/>
        <label>b562</label>
    </ligand>
    <ligandPart>
        <name>Fe</name>
        <dbReference type="ChEBI" id="CHEBI:18248"/>
    </ligandPart>
</feature>
<feature type="binding site" description="axial binding residue" evidence="2">
    <location>
        <position position="97"/>
    </location>
    <ligand>
        <name>heme b</name>
        <dbReference type="ChEBI" id="CHEBI:60344"/>
        <label>b566</label>
    </ligand>
    <ligandPart>
        <name>Fe</name>
        <dbReference type="ChEBI" id="CHEBI:18248"/>
    </ligandPart>
</feature>
<feature type="binding site" description="axial binding residue" evidence="2">
    <location>
        <position position="182"/>
    </location>
    <ligand>
        <name>heme b</name>
        <dbReference type="ChEBI" id="CHEBI:60344"/>
        <label>b562</label>
    </ligand>
    <ligandPart>
        <name>Fe</name>
        <dbReference type="ChEBI" id="CHEBI:18248"/>
    </ligandPart>
</feature>
<feature type="binding site" description="axial binding residue" evidence="2">
    <location>
        <position position="196"/>
    </location>
    <ligand>
        <name>heme b</name>
        <dbReference type="ChEBI" id="CHEBI:60344"/>
        <label>b566</label>
    </ligand>
    <ligandPart>
        <name>Fe</name>
        <dbReference type="ChEBI" id="CHEBI:18248"/>
    </ligandPart>
</feature>
<feature type="binding site" evidence="2">
    <location>
        <position position="201"/>
    </location>
    <ligand>
        <name>a ubiquinone</name>
        <dbReference type="ChEBI" id="CHEBI:16389"/>
    </ligand>
</feature>
<geneLocation type="mitochondrion"/>
<proteinExistence type="inferred from homology"/>
<dbReference type="EMBL" id="AY441467">
    <property type="protein sequence ID" value="AAS00148.1"/>
    <property type="molecule type" value="Genomic_DNA"/>
</dbReference>
<dbReference type="SMR" id="Q5VJ46"/>
<dbReference type="GO" id="GO:0005743">
    <property type="term" value="C:mitochondrial inner membrane"/>
    <property type="evidence" value="ECO:0007669"/>
    <property type="project" value="UniProtKB-SubCell"/>
</dbReference>
<dbReference type="GO" id="GO:0045275">
    <property type="term" value="C:respiratory chain complex III"/>
    <property type="evidence" value="ECO:0007669"/>
    <property type="project" value="InterPro"/>
</dbReference>
<dbReference type="GO" id="GO:0046872">
    <property type="term" value="F:metal ion binding"/>
    <property type="evidence" value="ECO:0007669"/>
    <property type="project" value="UniProtKB-KW"/>
</dbReference>
<dbReference type="GO" id="GO:0008121">
    <property type="term" value="F:ubiquinol-cytochrome-c reductase activity"/>
    <property type="evidence" value="ECO:0007669"/>
    <property type="project" value="InterPro"/>
</dbReference>
<dbReference type="GO" id="GO:0006122">
    <property type="term" value="P:mitochondrial electron transport, ubiquinol to cytochrome c"/>
    <property type="evidence" value="ECO:0007669"/>
    <property type="project" value="TreeGrafter"/>
</dbReference>
<dbReference type="CDD" id="cd00290">
    <property type="entry name" value="cytochrome_b_C"/>
    <property type="match status" value="1"/>
</dbReference>
<dbReference type="CDD" id="cd00284">
    <property type="entry name" value="Cytochrome_b_N"/>
    <property type="match status" value="1"/>
</dbReference>
<dbReference type="FunFam" id="1.20.810.10:FF:000002">
    <property type="entry name" value="Cytochrome b"/>
    <property type="match status" value="1"/>
</dbReference>
<dbReference type="Gene3D" id="1.20.810.10">
    <property type="entry name" value="Cytochrome Bc1 Complex, Chain C"/>
    <property type="match status" value="1"/>
</dbReference>
<dbReference type="InterPro" id="IPR005798">
    <property type="entry name" value="Cyt_b/b6_C"/>
</dbReference>
<dbReference type="InterPro" id="IPR036150">
    <property type="entry name" value="Cyt_b/b6_C_sf"/>
</dbReference>
<dbReference type="InterPro" id="IPR005797">
    <property type="entry name" value="Cyt_b/b6_N"/>
</dbReference>
<dbReference type="InterPro" id="IPR027387">
    <property type="entry name" value="Cytb/b6-like_sf"/>
</dbReference>
<dbReference type="InterPro" id="IPR030689">
    <property type="entry name" value="Cytochrome_b"/>
</dbReference>
<dbReference type="InterPro" id="IPR048260">
    <property type="entry name" value="Cytochrome_b_C_euk/bac"/>
</dbReference>
<dbReference type="InterPro" id="IPR048259">
    <property type="entry name" value="Cytochrome_b_N_euk/bac"/>
</dbReference>
<dbReference type="InterPro" id="IPR016174">
    <property type="entry name" value="Di-haem_cyt_TM"/>
</dbReference>
<dbReference type="PANTHER" id="PTHR19271">
    <property type="entry name" value="CYTOCHROME B"/>
    <property type="match status" value="1"/>
</dbReference>
<dbReference type="PANTHER" id="PTHR19271:SF16">
    <property type="entry name" value="CYTOCHROME B"/>
    <property type="match status" value="1"/>
</dbReference>
<dbReference type="Pfam" id="PF00032">
    <property type="entry name" value="Cytochrom_B_C"/>
    <property type="match status" value="1"/>
</dbReference>
<dbReference type="Pfam" id="PF00033">
    <property type="entry name" value="Cytochrome_B"/>
    <property type="match status" value="1"/>
</dbReference>
<dbReference type="PIRSF" id="PIRSF038885">
    <property type="entry name" value="COB"/>
    <property type="match status" value="1"/>
</dbReference>
<dbReference type="SUPFAM" id="SSF81648">
    <property type="entry name" value="a domain/subunit of cytochrome bc1 complex (Ubiquinol-cytochrome c reductase)"/>
    <property type="match status" value="1"/>
</dbReference>
<dbReference type="SUPFAM" id="SSF81342">
    <property type="entry name" value="Transmembrane di-heme cytochromes"/>
    <property type="match status" value="1"/>
</dbReference>
<dbReference type="PROSITE" id="PS51003">
    <property type="entry name" value="CYTB_CTER"/>
    <property type="match status" value="1"/>
</dbReference>
<dbReference type="PROSITE" id="PS51002">
    <property type="entry name" value="CYTB_NTER"/>
    <property type="match status" value="1"/>
</dbReference>
<name>CYB_GALGB</name>
<sequence length="379" mass="42792">MTNIRKHHPLAKMINHSFIDLPTPSNISSWWNFGSLLGLCLVIQITTGLFLAMHYTPDTTTAFSSITHICRDVNYGWIIRYLHANGASMFFICLFMHIGRGLYYGSFTFLETWNIGVILLFAVMATAFMGYVLPWGQMSFWGATVITNLLSAIPYMGTNLVEWIWGGFSVDKATLTRFFAFHFILPFIITALAMVHLLFLHETGSNNPSGISSDPDKIPFHPYYTTKDLLGVILLLLALFSLVLFSPDLLGDPDNYTPVNPLNTPPHIKPEWYFLFAYAILRSIPNKLGGVLALALSILILILIPFLHTAKQRSMMFRPLSQCLYWMLAADLLTLTWIGGQPVENPFITIGQVASIIYFSTILILMPLTNLLENKLLKW</sequence>
<organism>
    <name type="scientific">Galago gabonensis</name>
    <name type="common">Gabon Allen's galago</name>
    <dbReference type="NCBI Taxonomy" id="261731"/>
    <lineage>
        <taxon>Eukaryota</taxon>
        <taxon>Metazoa</taxon>
        <taxon>Chordata</taxon>
        <taxon>Craniata</taxon>
        <taxon>Vertebrata</taxon>
        <taxon>Euteleostomi</taxon>
        <taxon>Mammalia</taxon>
        <taxon>Eutheria</taxon>
        <taxon>Euarchontoglires</taxon>
        <taxon>Primates</taxon>
        <taxon>Strepsirrhini</taxon>
        <taxon>Lorisiformes</taxon>
        <taxon>Galagidae</taxon>
        <taxon>Galago</taxon>
    </lineage>
</organism>
<protein>
    <recommendedName>
        <fullName>Cytochrome b</fullName>
    </recommendedName>
    <alternativeName>
        <fullName>Complex III subunit 3</fullName>
    </alternativeName>
    <alternativeName>
        <fullName>Complex III subunit III</fullName>
    </alternativeName>
    <alternativeName>
        <fullName>Cytochrome b-c1 complex subunit 3</fullName>
    </alternativeName>
    <alternativeName>
        <fullName>Ubiquinol-cytochrome-c reductase complex cytochrome b subunit</fullName>
    </alternativeName>
</protein>
<accession>Q5VJ46</accession>
<keyword id="KW-0249">Electron transport</keyword>
<keyword id="KW-0349">Heme</keyword>
<keyword id="KW-0408">Iron</keyword>
<keyword id="KW-0472">Membrane</keyword>
<keyword id="KW-0479">Metal-binding</keyword>
<keyword id="KW-0496">Mitochondrion</keyword>
<keyword id="KW-0999">Mitochondrion inner membrane</keyword>
<keyword id="KW-0679">Respiratory chain</keyword>
<keyword id="KW-0812">Transmembrane</keyword>
<keyword id="KW-1133">Transmembrane helix</keyword>
<keyword id="KW-0813">Transport</keyword>
<keyword id="KW-0830">Ubiquinone</keyword>
<comment type="function">
    <text evidence="2">Component of the ubiquinol-cytochrome c reductase complex (complex III or cytochrome b-c1 complex) that is part of the mitochondrial respiratory chain. The b-c1 complex mediates electron transfer from ubiquinol to cytochrome c. Contributes to the generation of a proton gradient across the mitochondrial membrane that is then used for ATP synthesis.</text>
</comment>
<comment type="cofactor">
    <cofactor evidence="2">
        <name>heme b</name>
        <dbReference type="ChEBI" id="CHEBI:60344"/>
    </cofactor>
    <text evidence="2">Binds 2 heme b groups non-covalently.</text>
</comment>
<comment type="subunit">
    <text evidence="2">The cytochrome bc1 complex contains 11 subunits: 3 respiratory subunits (MT-CYB, CYC1 and UQCRFS1), 2 core proteins (UQCRC1 and UQCRC2) and 6 low-molecular weight proteins (UQCRH/QCR6, UQCRB/QCR7, UQCRQ/QCR8, UQCR10/QCR9, UQCR11/QCR10 and a cleavage product of UQCRFS1). This cytochrome bc1 complex then forms a dimer.</text>
</comment>
<comment type="subcellular location">
    <subcellularLocation>
        <location evidence="2">Mitochondrion inner membrane</location>
        <topology evidence="2">Multi-pass membrane protein</topology>
    </subcellularLocation>
</comment>
<comment type="miscellaneous">
    <text evidence="1">Heme 1 (or BL or b562) is low-potential and absorbs at about 562 nm, and heme 2 (or BH or b566) is high-potential and absorbs at about 566 nm.</text>
</comment>
<comment type="similarity">
    <text evidence="3 4">Belongs to the cytochrome b family.</text>
</comment>
<comment type="caution">
    <text evidence="2">The full-length protein contains only eight transmembrane helices, not nine as predicted by bioinformatics tools.</text>
</comment>
<evidence type="ECO:0000250" key="1"/>
<evidence type="ECO:0000250" key="2">
    <source>
        <dbReference type="UniProtKB" id="P00157"/>
    </source>
</evidence>
<evidence type="ECO:0000255" key="3">
    <source>
        <dbReference type="PROSITE-ProRule" id="PRU00967"/>
    </source>
</evidence>
<evidence type="ECO:0000255" key="4">
    <source>
        <dbReference type="PROSITE-ProRule" id="PRU00968"/>
    </source>
</evidence>
<gene>
    <name type="primary">MT-CYB</name>
    <name type="synonym">COB</name>
    <name type="synonym">CYTB</name>
    <name type="synonym">MTCYB</name>
</gene>
<reference key="1">
    <citation type="submission" date="2003-10" db="EMBL/GenBank/DDBJ databases">
        <title>61 primate SINEs and the evolution of strepsirrhines.</title>
        <authorList>
            <person name="Roos C."/>
            <person name="Schmitz J."/>
            <person name="Zischler H."/>
        </authorList>
    </citation>
    <scope>NUCLEOTIDE SEQUENCE [GENOMIC DNA]</scope>
</reference>